<dbReference type="EC" id="6.3.1.-" evidence="10"/>
<dbReference type="EMBL" id="HM622670">
    <property type="protein sequence ID" value="ADM34138.1"/>
    <property type="molecule type" value="Genomic_DNA"/>
</dbReference>
<dbReference type="SMR" id="E1ACQ0"/>
<dbReference type="GO" id="GO:0005737">
    <property type="term" value="C:cytoplasm"/>
    <property type="evidence" value="ECO:0007669"/>
    <property type="project" value="TreeGrafter"/>
</dbReference>
<dbReference type="GO" id="GO:0016874">
    <property type="term" value="F:ligase activity"/>
    <property type="evidence" value="ECO:0007669"/>
    <property type="project" value="UniProtKB-KW"/>
</dbReference>
<dbReference type="GO" id="GO:0031177">
    <property type="term" value="F:phosphopantetheine binding"/>
    <property type="evidence" value="ECO:0007669"/>
    <property type="project" value="TreeGrafter"/>
</dbReference>
<dbReference type="GO" id="GO:0009820">
    <property type="term" value="P:alkaloid metabolic process"/>
    <property type="evidence" value="ECO:0007669"/>
    <property type="project" value="UniProtKB-KW"/>
</dbReference>
<dbReference type="GO" id="GO:0043041">
    <property type="term" value="P:amino acid activation for nonribosomal peptide biosynthetic process"/>
    <property type="evidence" value="ECO:0007669"/>
    <property type="project" value="TreeGrafter"/>
</dbReference>
<dbReference type="GO" id="GO:0044550">
    <property type="term" value="P:secondary metabolite biosynthetic process"/>
    <property type="evidence" value="ECO:0007669"/>
    <property type="project" value="TreeGrafter"/>
</dbReference>
<dbReference type="CDD" id="cd05918">
    <property type="entry name" value="A_NRPS_SidN3_like"/>
    <property type="match status" value="2"/>
</dbReference>
<dbReference type="CDD" id="cd19542">
    <property type="entry name" value="CT_NRPS-like"/>
    <property type="match status" value="1"/>
</dbReference>
<dbReference type="CDD" id="cd19545">
    <property type="entry name" value="FUM14_C_NRPS-like"/>
    <property type="match status" value="1"/>
</dbReference>
<dbReference type="FunFam" id="3.30.300.30:FF:000015">
    <property type="entry name" value="Nonribosomal peptide synthase SidD"/>
    <property type="match status" value="2"/>
</dbReference>
<dbReference type="FunFam" id="3.30.559.30:FF:000003">
    <property type="entry name" value="Nonribosomal peptide synthase SidD"/>
    <property type="match status" value="1"/>
</dbReference>
<dbReference type="FunFam" id="3.40.50.12780:FF:000014">
    <property type="entry name" value="Nonribosomal peptide synthetase 1"/>
    <property type="match status" value="2"/>
</dbReference>
<dbReference type="Gene3D" id="3.30.300.30">
    <property type="match status" value="2"/>
</dbReference>
<dbReference type="Gene3D" id="1.10.1200.10">
    <property type="entry name" value="ACP-like"/>
    <property type="match status" value="2"/>
</dbReference>
<dbReference type="Gene3D" id="3.30.559.10">
    <property type="entry name" value="Chloramphenicol acetyltransferase-like domain"/>
    <property type="match status" value="2"/>
</dbReference>
<dbReference type="Gene3D" id="3.40.50.12780">
    <property type="entry name" value="N-terminal domain of ligase-like"/>
    <property type="match status" value="2"/>
</dbReference>
<dbReference type="Gene3D" id="3.30.559.30">
    <property type="entry name" value="Nonribosomal peptide synthetase, condensation domain"/>
    <property type="match status" value="2"/>
</dbReference>
<dbReference type="InterPro" id="IPR010071">
    <property type="entry name" value="AA_adenyl_dom"/>
</dbReference>
<dbReference type="InterPro" id="IPR036736">
    <property type="entry name" value="ACP-like_sf"/>
</dbReference>
<dbReference type="InterPro" id="IPR045851">
    <property type="entry name" value="AMP-bd_C_sf"/>
</dbReference>
<dbReference type="InterPro" id="IPR020845">
    <property type="entry name" value="AMP-binding_CS"/>
</dbReference>
<dbReference type="InterPro" id="IPR000873">
    <property type="entry name" value="AMP-dep_synth/lig_dom"/>
</dbReference>
<dbReference type="InterPro" id="IPR042099">
    <property type="entry name" value="ANL_N_sf"/>
</dbReference>
<dbReference type="InterPro" id="IPR023213">
    <property type="entry name" value="CAT-like_dom_sf"/>
</dbReference>
<dbReference type="InterPro" id="IPR001242">
    <property type="entry name" value="Condensatn"/>
</dbReference>
<dbReference type="InterPro" id="IPR009081">
    <property type="entry name" value="PP-bd_ACP"/>
</dbReference>
<dbReference type="InterPro" id="IPR006162">
    <property type="entry name" value="Ppantetheine_attach_site"/>
</dbReference>
<dbReference type="NCBIfam" id="TIGR01733">
    <property type="entry name" value="AA-adenyl-dom"/>
    <property type="match status" value="2"/>
</dbReference>
<dbReference type="PANTHER" id="PTHR45527">
    <property type="entry name" value="NONRIBOSOMAL PEPTIDE SYNTHETASE"/>
    <property type="match status" value="1"/>
</dbReference>
<dbReference type="PANTHER" id="PTHR45527:SF3">
    <property type="entry name" value="SIDEROPHORE SYNTHETASE (EUROFUNG)"/>
    <property type="match status" value="1"/>
</dbReference>
<dbReference type="Pfam" id="PF00501">
    <property type="entry name" value="AMP-binding"/>
    <property type="match status" value="2"/>
</dbReference>
<dbReference type="Pfam" id="PF00668">
    <property type="entry name" value="Condensation"/>
    <property type="match status" value="2"/>
</dbReference>
<dbReference type="Pfam" id="PF00550">
    <property type="entry name" value="PP-binding"/>
    <property type="match status" value="2"/>
</dbReference>
<dbReference type="SUPFAM" id="SSF56801">
    <property type="entry name" value="Acetyl-CoA synthetase-like"/>
    <property type="match status" value="2"/>
</dbReference>
<dbReference type="SUPFAM" id="SSF47336">
    <property type="entry name" value="ACP-like"/>
    <property type="match status" value="2"/>
</dbReference>
<dbReference type="SUPFAM" id="SSF52777">
    <property type="entry name" value="CoA-dependent acyltransferases"/>
    <property type="match status" value="4"/>
</dbReference>
<dbReference type="PROSITE" id="PS00455">
    <property type="entry name" value="AMP_BINDING"/>
    <property type="match status" value="2"/>
</dbReference>
<dbReference type="PROSITE" id="PS50075">
    <property type="entry name" value="CARRIER"/>
    <property type="match status" value="2"/>
</dbReference>
<dbReference type="PROSITE" id="PS00012">
    <property type="entry name" value="PHOSPHOPANTETHEINE"/>
    <property type="match status" value="1"/>
</dbReference>
<protein>
    <recommendedName>
        <fullName evidence="8">Nonribisomal peptide synthetase notE</fullName>
        <shortName evidence="8">NRPS notE</shortName>
        <ecNumber evidence="10">6.3.1.-</ecNumber>
    </recommendedName>
    <alternativeName>
        <fullName evidence="8">Notoamide biosynthesis cluster protein E</fullName>
    </alternativeName>
</protein>
<comment type="function">
    <text evidence="6 7 11">Nonribisomal peptide synthetase; part of the gene cluster that mediates the biosynthesis of notoamide, a fungal indole alkaloid that belongs to a family of natural products containing a characteristic bicyclo[2.2.2]diazaoctane core (PubMed:20722388). The first step of notoamide biosynthesis involves coupling of L-proline and L-tryptophan by the bimodular NRPS notE, to produce cyclo-L-tryptophan-L-proline called brevianamide F (PubMed:20722388). The reverse prenyltransferase notF then acts as a deoxybrevianamide E synthase and converts brevianamide F to deoxybrevianamide E via reverse prenylation at C-2 of the indole ring leading to the bicyclo[2.2.2]diazaoctane core (PubMed:20722388). Deoxybrevianamide E is further hydroxylated at C-6 of the indole ring, likely catalyzed by the cytochrome P450 monooxygenase notG, to yield 6-hydroxy-deoxybrevianamide E (Probable). 6-hydroxy-deoxybrevianamide E is a specific substrate of the prenyltransferase notC for normal prenylation at C-7 to produce 6-hydroxy-7-prenyl-deoxybrevianamide, also called notoamide S (PubMed:20722388). As the proposed pivotal branching point in notoamide biosynthesis, notoamide S can be diverted to notoamide E through an oxidative pyran ring closure putatively catalyzed by either notH cytochrome P450 monooxygenase or the notD FAD-linked oxidoreductase (Probable). This step would be followed by an indole 2,3-epoxidation-initiated pinacol-like rearrangement catalyzed by the notB FAD-dependent monooxygenase leading to the formation of notoamide C and notoamide D (PubMed:22188465). On the other hand notoamide S is converted to notoamide T by notH (or notD), a bifunctional oxidase that also functions as the intramolecular Diels-Alderase responsible for generation of (+)-notoamide T (Probable). To generate antipodal (-)-notoaminide T, notH' (or notD') in Aspergillus versicolor is expected to catalyze a Diels-Alder reaction leading to the opposite stereochemistry (Probable). The remaining oxidoreductase notD (or notH) likely catalyzes the oxidative pyran ring formation to yield (+)-stephacidin A (Probable). The FAD-dependent monooxygenase notI is highly similar to notB and is predicted to catalyze a similar conversion from (+)-stephacidin A to (-)-notoamide B via the 2,3-epoxidation of (+)-stephacidin A followed by a pinacol-type rearrangement (Probable). Finally, it remains unclear which enzyme could be responsible for the final hydroxylation steps leading to notoamide A and sclerotiamide (Probable).</text>
</comment>
<comment type="catalytic activity">
    <reaction evidence="10">
        <text>L-proline + L-tryptophan + 2 ATP = brevianamide F + 2 AMP + 2 diphosphate + 2 H(+)</text>
        <dbReference type="Rhea" id="RHEA:35935"/>
        <dbReference type="ChEBI" id="CHEBI:15378"/>
        <dbReference type="ChEBI" id="CHEBI:30616"/>
        <dbReference type="ChEBI" id="CHEBI:33019"/>
        <dbReference type="ChEBI" id="CHEBI:57912"/>
        <dbReference type="ChEBI" id="CHEBI:60039"/>
        <dbReference type="ChEBI" id="CHEBI:64530"/>
        <dbReference type="ChEBI" id="CHEBI:456215"/>
    </reaction>
    <physiologicalReaction direction="left-to-right" evidence="10">
        <dbReference type="Rhea" id="RHEA:35936"/>
    </physiologicalReaction>
</comment>
<comment type="pathway">
    <text evidence="10">Alkaloid biosynthesis.</text>
</comment>
<comment type="domain">
    <text evidence="1 10">NRP synthetases are composed of discrete domains (adenylation (A), thiolation (T) or peptidyl carrier protein (PCP) and condensation (C) domains) which when grouped together are referred to as a single module. Each module is responsible for the recognition (via the A domain) and incorporation of a single amino acid into the growing peptide product. Thus, an NRP synthetase is generally composed of one or more modules and can terminate in a thioesterase domain (TE) that releases the newly synthesized peptide from the enzyme. Occasionally, epimerase (E) domains (responsible for L- to D-amino acid conversion) are present within the NRP synthetase (By similarity). NotE as the following architecture: A1-T1-C1-A2-T2-C2. The presence of two intact modules suggests that the two modules condense L-tryptophan and L-phenylalanine together. The C-terminal condensation domain might be responsible for cyclization of the dipeptide to form the diketopiperazine structure (Probable).</text>
</comment>
<comment type="biotechnology">
    <text evidence="5">Notoamides have been shown to exhibit antitumoral activities (PubMed:17304611). Notoamides A-C show moderate cytotoxicity against HeLa and L1210 cells with IC(50) values in the range of 22-52 mg/ml, but the IC(50) value of notoamide D is greater than 100 mg/ml (PubMed:17304611). Moreover, notoamide C induces G2/M-cell cycle arrest at a concentration of 6.3 mg/ml (PubMed:17304611).</text>
</comment>
<comment type="similarity">
    <text evidence="9">Belongs to the NRP synthetase family.</text>
</comment>
<evidence type="ECO:0000250" key="1">
    <source>
        <dbReference type="UniProtKB" id="Q4WMJ7"/>
    </source>
</evidence>
<evidence type="ECO:0000255" key="2"/>
<evidence type="ECO:0000255" key="3">
    <source>
        <dbReference type="PROSITE-ProRule" id="PRU00258"/>
    </source>
</evidence>
<evidence type="ECO:0000256" key="4">
    <source>
        <dbReference type="SAM" id="MobiDB-lite"/>
    </source>
</evidence>
<evidence type="ECO:0000269" key="5">
    <source>
    </source>
</evidence>
<evidence type="ECO:0000269" key="6">
    <source>
    </source>
</evidence>
<evidence type="ECO:0000269" key="7">
    <source>
    </source>
</evidence>
<evidence type="ECO:0000303" key="8">
    <source>
    </source>
</evidence>
<evidence type="ECO:0000305" key="9"/>
<evidence type="ECO:0000305" key="10">
    <source>
    </source>
</evidence>
<evidence type="ECO:0000305" key="11">
    <source>
    </source>
</evidence>
<keyword id="KW-0017">Alkaloid metabolism</keyword>
<keyword id="KW-0436">Ligase</keyword>
<keyword id="KW-0596">Phosphopantetheine</keyword>
<keyword id="KW-0597">Phosphoprotein</keyword>
<keyword id="KW-0677">Repeat</keyword>
<sequence length="2240" mass="245924">MDSIKLTESHQGLSVLHAKQATETMRETLSSSSSPLSLSSITSPLSSASEPPALGEIQARVSESTLFSNAQVPEFWETCVHEVIQQRCREAPESSAVAAWDGSFTYSELDELSNRLASSLILLGVKAETFVPICMEKSRWATVAILGVMKAGGAFTLLDPSYPLPRLKTICEELSSLVVLSSTTQSERCTQLANVIVVEHLCRAWHPGAYLAQSPATVCPSNVLYVAFTSGSTGKPKGVLIEHRAYSTGAREHLRVFQIDQTSRVLQFSSYAFDVNIMETLSTLMAGGCLCVVGEAQRSDVSLFAEAVDELQVSHAMLTPSFARTVPWENVRHLRVLILGGEEMRESDAAICAERGVRLINAYGAAECSVNATARPGVQPGDNLSTIGHGTGAIAWIIDPDDPERQMGPGTAGELLLEGPIVGRGYLNSPDMTDRVFIDPPTWLRQLRMMDYQHQLYRTGDLAVQDSTGALTLLGRKEGQVKIRGQRVEVAEIEQHIDQVLTAATEVVVEKVTPECDQRDVLMAFVQTGRAAQGWTEGSPFFLPPRPASIQEFSAAQSQLREQLPSYMIPAIFIGVSCIPRTPSGKADRRLLRMTAARLSREELQAFAGSPVHSRPPTTATEHALQQLYADVLELPIMRISMEDSFVRLGGDSIMAVRLVGAARQAGLVLDIRDVLGTARLEEQARKATPVSEETPCEAYVPFSMLGSRCTDRDEVLRVAAEQCGTSPSEIEDIFPCTPLQEGMLALSSSQPQMYVGQIVFGMPEDVDVSQFKAAWQSTADATPILRTRIIHTPQGLLQVVLRGKLAWENYNEHPEACAADVGSQIGSPGAPLIRFALGDGDHRGEFTLTVHHAVWDAWTMRLIHDALERSFQGEMTKKHPFHPFIQYLQQVDGATMDDFWRTELADLEAPSFPALPSTQHRPSPTAMLRHTVEKIEVVPRIHTMASYIHLAWSLLVAHYTDSTEAVYGAIVSGRNSPVAAINELAGPTIATVPVRVRVSPEDTVSAALEQIQTCMVRMVPHEQAGLLRIAKASPDAARACSFQSHLNIQVVEQEHRLLPARRGIASTGMELTRFSSYALNLMLQLSPDNTSVTVDIAYDPQVLSAWEVDRMIHQWEHILRQICREPSGSLQELDFASPQDRDLLRLRNSETPTVDWRCLHDLVLAQEARQPSREAVSAWDGDFTYRELAELSSNFARLLNLFAVGRGSFVPICMDKSRWAIVSILAVLQAGATCVLLDPQHPRQRMQDTIAGLSVPVLVNAPSTAPVTKGLCAIELCVSAKLTEQLWTNAYGSRFQTHVDPDDLAFLIFTSGSTGVPKGIAMPHCTVSSSIYHNSAPMMFDADTRALHFSSYAFDVSIYEIFTTLASGGCVCVPSEFQRTNELADFIQQRAVNWTFLTPSTAQSLHPSEVPGVATLVLGGEAVTPDHVKTWAPGRSLINGYGPAEATICAVGPMPEHGWDPGNIGHVVGGVGWVTIPSDPSRLAAIGAIGELLLEGPFLARGYLNQHEATAASFISPPPWHRTLLPDCDAETTRLYRTGDLVQYEEDGSIRYIGRRDTQLKLRGQRIDLGEIETQLRRSFPGVHDVVAEAIQLPILQDRAALVAFIGCQEAQVTESAVGEQVLSAVDESFQHTVSLAQTRLQAILPPYMLPSVFFPLAHCPKTLTGKTDRRYLRQAVLALPPHELQRYRVAGRQKARIPVSRGPELRLQSIWADLLRIPCDDIGSDDTFLLHGGDSVAAMRMVALARRADFTFRVTDVLSNCTLSELARCTGEEPCLTDGDGTLPTTHEFESGHKMVDSPVSADYHTGMIGTELEMENDAIAVYPTTQAQSFLIKRYPWTHWRFSFHGEVSVERLRTACARLVAAHSIMRTLFVAGAGGERVRHVVMKELDIPLHTGTTHKNLVDYCQSICDAEQEMDVLEAVLPTRLTLISDALQTSHIFILRLSHAQYDGICVPKIFADLEALYNGTEPIAPTRFERYLDERRWYSGERARAFWKEYLAGSSPPCTMPVKATPPTDSDDSRPSAARSVISASQTVRCTAIPFQVTLATVVKAAACLVLARLTGRTDITVGQTVNGRSLPQPWVSEVVGPCVNYIPFRATLSESMSIQDYLVHMQSQHNRCIHYDGAELDTIIKNCTTWDPSTEFGFILQHQNIDMDLSLTLDGNRCASCASSGRLRPSNEVWICSTPSPSGVDLDVVASSQTLTADAAKNLVDDIADMIQTLLYNLETPLRDVVEFD</sequence>
<organism>
    <name type="scientific">Aspergillus sp. (strain MF297-2)</name>
    <dbReference type="NCBI Taxonomy" id="877550"/>
    <lineage>
        <taxon>Eukaryota</taxon>
        <taxon>Fungi</taxon>
        <taxon>Dikarya</taxon>
        <taxon>Ascomycota</taxon>
        <taxon>Pezizomycotina</taxon>
        <taxon>Eurotiomycetes</taxon>
        <taxon>Eurotiomycetidae</taxon>
        <taxon>Eurotiales</taxon>
        <taxon>Aspergillaceae</taxon>
        <taxon>Aspergillus</taxon>
    </lineage>
</organism>
<proteinExistence type="evidence at protein level"/>
<gene>
    <name evidence="8" type="primary">notE</name>
</gene>
<feature type="chain" id="PRO_0000448811" description="Nonribisomal peptide synthetase notE">
    <location>
        <begin position="1"/>
        <end position="2240"/>
    </location>
</feature>
<feature type="domain" description="Carrier 1" evidence="3 10">
    <location>
        <begin position="616"/>
        <end position="692"/>
    </location>
</feature>
<feature type="domain" description="Carrier 2" evidence="3 10">
    <location>
        <begin position="1700"/>
        <end position="1776"/>
    </location>
</feature>
<feature type="region of interest" description="Disordered" evidence="4">
    <location>
        <begin position="22"/>
        <end position="52"/>
    </location>
</feature>
<feature type="region of interest" description="Adenylation 1" evidence="2 10">
    <location>
        <begin position="85"/>
        <end position="484"/>
    </location>
</feature>
<feature type="region of interest" description="Condensation 1" evidence="2 10">
    <location>
        <begin position="732"/>
        <end position="1144"/>
    </location>
</feature>
<feature type="region of interest" description="Adenylation 2" evidence="2 10">
    <location>
        <begin position="1167"/>
        <end position="1564"/>
    </location>
</feature>
<feature type="region of interest" description="Condensation 2" evidence="2 10">
    <location>
        <begin position="1845"/>
        <end position="2159"/>
    </location>
</feature>
<feature type="region of interest" description="Disordered" evidence="4">
    <location>
        <begin position="2008"/>
        <end position="2027"/>
    </location>
</feature>
<feature type="compositionally biased region" description="Low complexity" evidence="4">
    <location>
        <begin position="28"/>
        <end position="52"/>
    </location>
</feature>
<feature type="modified residue" description="O-(pantetheine 4'-phosphoryl)serine" evidence="3">
    <location>
        <position position="653"/>
    </location>
</feature>
<feature type="modified residue" description="O-(pantetheine 4'-phosphoryl)serine" evidence="3">
    <location>
        <position position="1737"/>
    </location>
</feature>
<accession>E1ACQ0</accession>
<reference key="1">
    <citation type="journal article" date="2010" name="J. Am. Chem. Soc.">
        <title>Genome-based characterization of two prenylation steps in the assembly of the stephacidin and notoamide anticancer agents in a marine-derived Aspergillus sp.</title>
        <authorList>
            <person name="Ding Y."/>
            <person name="de Wet J.R."/>
            <person name="Cavalcoli J."/>
            <person name="Li S."/>
            <person name="Greshock T.J."/>
            <person name="Miller K.A."/>
            <person name="Finefield J.M."/>
            <person name="Sunderhaus J.D."/>
            <person name="McAfoos T.J."/>
            <person name="Tsukamoto S."/>
            <person name="Williams R.M."/>
            <person name="Sherman D.H."/>
        </authorList>
    </citation>
    <scope>NUCLEOTIDE SEQUENCE [GENOMIC DNA]</scope>
    <scope>FUNCTION</scope>
    <scope>DOMAIN</scope>
    <scope>PATHWAY</scope>
    <source>
        <strain>MF297-2</strain>
    </source>
</reference>
<reference key="2">
    <citation type="journal article" date="2007" name="Angew. Chem. Int. Ed.">
        <title>Notoamides A-D: prenylated indole alkaloids isolated from a marine-derived fungus, Aspergillus sp.</title>
        <authorList>
            <person name="Kato H."/>
            <person name="Yoshida T."/>
            <person name="Tokue T."/>
            <person name="Nojiri Y."/>
            <person name="Hirota H."/>
            <person name="Ohta T."/>
            <person name="Williams R.M."/>
            <person name="Tsukamoto S."/>
        </authorList>
    </citation>
    <scope>BIOTECHNOLOGY</scope>
</reference>
<reference key="3">
    <citation type="journal article" date="2012" name="J. Am. Chem. Soc.">
        <title>Biochemical characterization of NotB as an FAD-dependent oxidase in the biosynthesis of notoamide indole alkaloids.</title>
        <authorList>
            <person name="Li S."/>
            <person name="Finefield J.M."/>
            <person name="Sunderhaus J.D."/>
            <person name="McAfoos T.J."/>
            <person name="Williams R.M."/>
            <person name="Sherman D.H."/>
        </authorList>
    </citation>
    <scope>FUNCTION</scope>
</reference>
<reference key="4">
    <citation type="journal article" date="2012" name="Med. Chem. Commun.">
        <title>Comparative analysis of the biosynthetic systems for fungal bicyclo[2.2.2]diazaoctane indole alkaloids: the (+)/(-)-notoamide, paraherquamide and malbrancheamide pathways.</title>
        <authorList>
            <person name="Li S."/>
            <person name="Anand K."/>
            <person name="Tran H."/>
            <person name="Yu F."/>
            <person name="Finefield J.M."/>
            <person name="Sunderhaus J.D."/>
            <person name="McAfoos T.J."/>
            <person name="Tsukamoto S."/>
            <person name="Williams R.M."/>
            <person name="Sherman D.H."/>
        </authorList>
    </citation>
    <scope>FUNCTION</scope>
</reference>
<name>NOTE_ASPSM</name>